<name>ALLA_ECOLU</name>
<feature type="chain" id="PRO_1000130415" description="Ureidoglycolate lyase">
    <location>
        <begin position="1"/>
        <end position="160"/>
    </location>
</feature>
<keyword id="KW-0456">Lyase</keyword>
<keyword id="KW-0659">Purine metabolism</keyword>
<accession>B7N960</accession>
<dbReference type="EC" id="4.3.2.3" evidence="1"/>
<dbReference type="EMBL" id="CU928163">
    <property type="protein sequence ID" value="CAR11761.1"/>
    <property type="molecule type" value="Genomic_DNA"/>
</dbReference>
<dbReference type="RefSeq" id="WP_000776372.1">
    <property type="nucleotide sequence ID" value="NC_011751.1"/>
</dbReference>
<dbReference type="RefSeq" id="YP_002411309.1">
    <property type="nucleotide sequence ID" value="NC_011751.1"/>
</dbReference>
<dbReference type="SMR" id="B7N960"/>
<dbReference type="STRING" id="585056.ECUMN_0546"/>
<dbReference type="KEGG" id="eum:ECUMN_0546"/>
<dbReference type="PATRIC" id="fig|585056.7.peg.754"/>
<dbReference type="HOGENOM" id="CLU_070848_1_1_6"/>
<dbReference type="UniPathway" id="UPA00395"/>
<dbReference type="Proteomes" id="UP000007097">
    <property type="component" value="Chromosome"/>
</dbReference>
<dbReference type="GO" id="GO:0004848">
    <property type="term" value="F:ureidoglycolate hydrolase activity"/>
    <property type="evidence" value="ECO:0007669"/>
    <property type="project" value="InterPro"/>
</dbReference>
<dbReference type="GO" id="GO:0050385">
    <property type="term" value="F:ureidoglycolate lyase activity"/>
    <property type="evidence" value="ECO:0007669"/>
    <property type="project" value="UniProtKB-UniRule"/>
</dbReference>
<dbReference type="GO" id="GO:0000256">
    <property type="term" value="P:allantoin catabolic process"/>
    <property type="evidence" value="ECO:0007669"/>
    <property type="project" value="UniProtKB-UniRule"/>
</dbReference>
<dbReference type="GO" id="GO:0006145">
    <property type="term" value="P:purine nucleobase catabolic process"/>
    <property type="evidence" value="ECO:0007669"/>
    <property type="project" value="UniProtKB-UniRule"/>
</dbReference>
<dbReference type="CDD" id="cd20298">
    <property type="entry name" value="cupin_UAH"/>
    <property type="match status" value="1"/>
</dbReference>
<dbReference type="FunFam" id="2.60.120.480:FF:000001">
    <property type="entry name" value="Ureidoglycolate lyase"/>
    <property type="match status" value="1"/>
</dbReference>
<dbReference type="Gene3D" id="2.60.120.480">
    <property type="entry name" value="Ureidoglycolate hydrolase"/>
    <property type="match status" value="1"/>
</dbReference>
<dbReference type="HAMAP" id="MF_00616">
    <property type="entry name" value="Ureidogly_lyase"/>
    <property type="match status" value="1"/>
</dbReference>
<dbReference type="InterPro" id="IPR011051">
    <property type="entry name" value="RmlC_Cupin_sf"/>
</dbReference>
<dbReference type="InterPro" id="IPR047233">
    <property type="entry name" value="UAH_cupin"/>
</dbReference>
<dbReference type="InterPro" id="IPR007247">
    <property type="entry name" value="Ureidogly_lyase"/>
</dbReference>
<dbReference type="InterPro" id="IPR023525">
    <property type="entry name" value="Ureidogly_lyase_bac"/>
</dbReference>
<dbReference type="InterPro" id="IPR024060">
    <property type="entry name" value="Ureidoglycolate_lyase_dom_sf"/>
</dbReference>
<dbReference type="NCBIfam" id="NF002948">
    <property type="entry name" value="PRK03606.1-1"/>
    <property type="match status" value="1"/>
</dbReference>
<dbReference type="NCBIfam" id="NF009932">
    <property type="entry name" value="PRK13395.1"/>
    <property type="match status" value="1"/>
</dbReference>
<dbReference type="PANTHER" id="PTHR21221">
    <property type="entry name" value="UREIDOGLYCOLATE HYDROLASE"/>
    <property type="match status" value="1"/>
</dbReference>
<dbReference type="PANTHER" id="PTHR21221:SF1">
    <property type="entry name" value="UREIDOGLYCOLATE LYASE"/>
    <property type="match status" value="1"/>
</dbReference>
<dbReference type="Pfam" id="PF04115">
    <property type="entry name" value="Ureidogly_lyase"/>
    <property type="match status" value="1"/>
</dbReference>
<dbReference type="PIRSF" id="PIRSF017306">
    <property type="entry name" value="Ureidogly_hydro"/>
    <property type="match status" value="1"/>
</dbReference>
<dbReference type="SUPFAM" id="SSF51182">
    <property type="entry name" value="RmlC-like cupins"/>
    <property type="match status" value="1"/>
</dbReference>
<reference key="1">
    <citation type="journal article" date="2009" name="PLoS Genet.">
        <title>Organised genome dynamics in the Escherichia coli species results in highly diverse adaptive paths.</title>
        <authorList>
            <person name="Touchon M."/>
            <person name="Hoede C."/>
            <person name="Tenaillon O."/>
            <person name="Barbe V."/>
            <person name="Baeriswyl S."/>
            <person name="Bidet P."/>
            <person name="Bingen E."/>
            <person name="Bonacorsi S."/>
            <person name="Bouchier C."/>
            <person name="Bouvet O."/>
            <person name="Calteau A."/>
            <person name="Chiapello H."/>
            <person name="Clermont O."/>
            <person name="Cruveiller S."/>
            <person name="Danchin A."/>
            <person name="Diard M."/>
            <person name="Dossat C."/>
            <person name="Karoui M.E."/>
            <person name="Frapy E."/>
            <person name="Garry L."/>
            <person name="Ghigo J.M."/>
            <person name="Gilles A.M."/>
            <person name="Johnson J."/>
            <person name="Le Bouguenec C."/>
            <person name="Lescat M."/>
            <person name="Mangenot S."/>
            <person name="Martinez-Jehanne V."/>
            <person name="Matic I."/>
            <person name="Nassif X."/>
            <person name="Oztas S."/>
            <person name="Petit M.A."/>
            <person name="Pichon C."/>
            <person name="Rouy Z."/>
            <person name="Ruf C.S."/>
            <person name="Schneider D."/>
            <person name="Tourret J."/>
            <person name="Vacherie B."/>
            <person name="Vallenet D."/>
            <person name="Medigue C."/>
            <person name="Rocha E.P.C."/>
            <person name="Denamur E."/>
        </authorList>
    </citation>
    <scope>NUCLEOTIDE SEQUENCE [LARGE SCALE GENOMIC DNA]</scope>
    <source>
        <strain>UMN026 / ExPEC</strain>
    </source>
</reference>
<gene>
    <name evidence="1" type="primary">allA</name>
    <name type="ordered locus">ECUMN_0546</name>
</gene>
<sequence length="160" mass="18223">MKLQVLPLSQEAFSAYGDVIETQKRDFFHINNGLVERYHDLALVEILEQDRTLISINRAQPANLPLTIHELERHPLGTQAFIPMKGEVFVVVVALGDDKPDLSTLRAFITNGEQGVNYHRNVWHHPLFAWQRVTDFLTIDRGGSDNCDVESIPEQELCFA</sequence>
<comment type="function">
    <text evidence="1">Catalyzes the catabolism of the allantoin degradation intermediate (S)-ureidoglycolate, generating urea and glyoxylate. Involved in the anaerobic utilization of allantoin as sole nitrogen source. Reinforces the induction of genes involved in the degradation of allantoin and glyoxylate by producing glyoxylate.</text>
</comment>
<comment type="catalytic activity">
    <reaction evidence="1">
        <text>(S)-ureidoglycolate = urea + glyoxylate</text>
        <dbReference type="Rhea" id="RHEA:11304"/>
        <dbReference type="ChEBI" id="CHEBI:16199"/>
        <dbReference type="ChEBI" id="CHEBI:36655"/>
        <dbReference type="ChEBI" id="CHEBI:57296"/>
        <dbReference type="EC" id="4.3.2.3"/>
    </reaction>
</comment>
<comment type="cofactor">
    <cofactor evidence="1">
        <name>Ni(2+)</name>
        <dbReference type="ChEBI" id="CHEBI:49786"/>
    </cofactor>
</comment>
<comment type="pathway">
    <text evidence="1">Nitrogen metabolism; (S)-allantoin degradation.</text>
</comment>
<comment type="subunit">
    <text evidence="1">Homodimer.</text>
</comment>
<comment type="similarity">
    <text evidence="1">Belongs to the ureidoglycolate lyase family.</text>
</comment>
<evidence type="ECO:0000255" key="1">
    <source>
        <dbReference type="HAMAP-Rule" id="MF_00616"/>
    </source>
</evidence>
<proteinExistence type="inferred from homology"/>
<protein>
    <recommendedName>
        <fullName evidence="1">Ureidoglycolate lyase</fullName>
        <ecNumber evidence="1">4.3.2.3</ecNumber>
    </recommendedName>
    <alternativeName>
        <fullName evidence="1">Ureidoglycolatase</fullName>
    </alternativeName>
</protein>
<organism>
    <name type="scientific">Escherichia coli O17:K52:H18 (strain UMN026 / ExPEC)</name>
    <dbReference type="NCBI Taxonomy" id="585056"/>
    <lineage>
        <taxon>Bacteria</taxon>
        <taxon>Pseudomonadati</taxon>
        <taxon>Pseudomonadota</taxon>
        <taxon>Gammaproteobacteria</taxon>
        <taxon>Enterobacterales</taxon>
        <taxon>Enterobacteriaceae</taxon>
        <taxon>Escherichia</taxon>
    </lineage>
</organism>